<reference key="1">
    <citation type="journal article" date="1992" name="Appl. Environ. Microbiol.">
        <title>Cloning of the Pseudomonas glumae lipase gene and determination of the active site residues.</title>
        <authorList>
            <person name="Frenken L.G.J."/>
            <person name="Egmond M.R."/>
            <person name="Batenburg A.M."/>
            <person name="Bos J.W."/>
            <person name="Visser C."/>
            <person name="Verrips C.T."/>
        </authorList>
    </citation>
    <scope>NUCLEOTIDE SEQUENCE [GENOMIC DNA]</scope>
    <scope>PROTEIN SEQUENCE OF 40-61</scope>
    <scope>FUNCTION</scope>
    <scope>CATALYTIC ACTIVITY</scope>
    <scope>BIOPHYSICOCHEMICAL PROPERTIES</scope>
    <scope>MUTAGENESIS OF HIS-54; SER-126; ASP-160; ASP-280; ASP-302 AND HIS-324</scope>
    <scope>SUBCELLULAR LOCATION</scope>
    <scope>ACTIVE SITE</scope>
    <scope>NOMENCLATURE</scope>
    <source>
        <strain>PG1 / CBS 322.89</strain>
    </source>
</reference>
<reference key="2">
    <citation type="journal article" date="1995" name="Biochim. Biophys. Acta">
        <title>Lipase from Chromobacterium viscosum: biochemical characterization indicating homology to the lipase from Pseudomonas glumae.</title>
        <authorList>
            <person name="Taipa M.A."/>
            <person name="Liebeton K."/>
            <person name="Costa J.V."/>
            <person name="Cabral J.M.S."/>
            <person name="Jaeger K.-E."/>
        </authorList>
    </citation>
    <scope>PROTEIN SEQUENCE OF 40-54</scope>
    <scope>FUNCTION</scope>
</reference>
<reference key="3">
    <citation type="journal article" date="1993" name="Mol. Microbiol.">
        <title>An accessory gene, lipB, required for the production of active Pseudomonas glumae lipase.</title>
        <authorList>
            <person name="Frenken L.G.J."/>
            <person name="Bos J.W."/>
            <person name="Visser C."/>
            <person name="Mueller W."/>
            <person name="Tommassen J."/>
            <person name="Verrips C.T."/>
        </authorList>
    </citation>
    <scope>SUBCELLULAR LOCATION</scope>
    <scope>INDUCTION</scope>
    <scope>DISRUPTION PHENOTYPE</scope>
    <scope>BIOTECHNOLOGY</scope>
    <source>
        <strain>PG1 / CBS 322.89</strain>
    </source>
</reference>
<reference key="4">
    <citation type="journal article" date="1993" name="Mol. Microbiol.">
        <title>Role of the lipB gene product in the folding of the secreted lipase of Pseudomonas glumae.</title>
        <authorList>
            <person name="Frenken L.G.J."/>
            <person name="de Groot A."/>
            <person name="Tommassen J."/>
            <person name="Verrips C.T."/>
        </authorList>
    </citation>
    <scope>FOLDING AND ASSEMBLY</scope>
    <source>
        <strain>PG1 / CBS 322.89</strain>
    </source>
</reference>
<reference evidence="16" key="5">
    <citation type="journal article" date="1993" name="FEBS Lett.">
        <title>The crystal structure of triacylglycerol lipase from Pseudomonas glumae reveals a partially redundant catalytic aspartate.</title>
        <authorList>
            <person name="Noble M.E.M."/>
            <person name="Cleasby A."/>
            <person name="Johnson L.N."/>
            <person name="Egmond M.R."/>
            <person name="Frenken L.G.J."/>
        </authorList>
    </citation>
    <scope>X-RAY CRYSTALLOGRAPHY (3.0 ANGSTROMS) OF 41-358 IN COMPLEX WITH CALCIUM ION</scope>
    <scope>COFACTOR</scope>
    <scope>ACTIVE SITE</scope>
    <scope>DISULFIDE BOND</scope>
    <scope>SUBUNIT</scope>
    <source>
        <strain>PG1 / CBS 322.89</strain>
    </source>
</reference>
<reference evidence="17" key="6">
    <citation type="journal article" date="2006" name="Nat. Struct. Mol. Biol.">
        <title>Structure of a membrane-based steric chaperone in complex with its lipase substrate.</title>
        <authorList>
            <person name="Pauwels K."/>
            <person name="Lustig A."/>
            <person name="Wyns L."/>
            <person name="Tommassen J."/>
            <person name="Savvides S.N."/>
            <person name="Van Gelder P."/>
        </authorList>
    </citation>
    <scope>X-RAY CRYSTALLOGRAPHY (1.85 ANGSTROMS) OF 40-358 IN COMPLEX WITH LIFO AND CALCIUM ION</scope>
    <scope>COFACTOR</scope>
    <scope>DISULFIDE BOND</scope>
    <scope>SUBUNIT</scope>
    <source>
        <strain>PG1 / CBS 322.89</strain>
    </source>
</reference>
<keyword id="KW-0002">3D-structure</keyword>
<keyword id="KW-0106">Calcium</keyword>
<keyword id="KW-0903">Direct protein sequencing</keyword>
<keyword id="KW-1015">Disulfide bond</keyword>
<keyword id="KW-0378">Hydrolase</keyword>
<keyword id="KW-0442">Lipid degradation</keyword>
<keyword id="KW-0443">Lipid metabolism</keyword>
<keyword id="KW-0479">Metal-binding</keyword>
<keyword id="KW-0964">Secreted</keyword>
<keyword id="KW-0732">Signal</keyword>
<proteinExistence type="evidence at protein level"/>
<organism>
    <name type="scientific">Burkholderia plantarii</name>
    <dbReference type="NCBI Taxonomy" id="41899"/>
    <lineage>
        <taxon>Bacteria</taxon>
        <taxon>Pseudomonadati</taxon>
        <taxon>Pseudomonadota</taxon>
        <taxon>Betaproteobacteria</taxon>
        <taxon>Burkholderiales</taxon>
        <taxon>Burkholderiaceae</taxon>
        <taxon>Burkholderia</taxon>
    </lineage>
</organism>
<feature type="signal peptide" evidence="4">
    <location>
        <begin position="1"/>
        <end position="39"/>
    </location>
</feature>
<feature type="chain" id="PRO_0000017741" description="Triacylglycerol lipase">
    <location>
        <begin position="40"/>
        <end position="358"/>
    </location>
</feature>
<feature type="domain" description="AB hydrolase-1" evidence="3">
    <location>
        <begin position="48"/>
        <end position="327"/>
    </location>
</feature>
<feature type="active site" description="Nucleophile" evidence="4 14">
    <location>
        <position position="126"/>
    </location>
</feature>
<feature type="active site" description="Charge relay system" evidence="4 14">
    <location>
        <position position="302"/>
    </location>
</feature>
<feature type="active site" description="Charge relay system" evidence="4 14">
    <location>
        <position position="324"/>
    </location>
</feature>
<feature type="binding site" evidence="1">
    <location>
        <position position="56"/>
    </location>
    <ligand>
        <name>substrate</name>
    </ligand>
</feature>
<feature type="binding site" evidence="1">
    <location>
        <position position="127"/>
    </location>
    <ligand>
        <name>substrate</name>
    </ligand>
</feature>
<feature type="binding site" evidence="5 7 16 17">
    <location>
        <position position="280"/>
    </location>
    <ligand>
        <name>Ca(2+)</name>
        <dbReference type="ChEBI" id="CHEBI:29108"/>
    </ligand>
</feature>
<feature type="binding site" evidence="5 7 16 17">
    <location>
        <position position="326"/>
    </location>
    <ligand>
        <name>Ca(2+)</name>
        <dbReference type="ChEBI" id="CHEBI:29108"/>
    </ligand>
</feature>
<feature type="binding site" evidence="5 7 16 17">
    <location>
        <position position="330"/>
    </location>
    <ligand>
        <name>Ca(2+)</name>
        <dbReference type="ChEBI" id="CHEBI:29108"/>
    </ligand>
</feature>
<feature type="binding site" evidence="5 7 16 17">
    <location>
        <position position="334"/>
    </location>
    <ligand>
        <name>Ca(2+)</name>
        <dbReference type="ChEBI" id="CHEBI:29108"/>
    </ligand>
</feature>
<feature type="disulfide bond" evidence="5 7">
    <location>
        <begin position="229"/>
        <end position="308"/>
    </location>
</feature>
<feature type="mutagenesis site" description="No effect on enzyme activity." evidence="4">
    <original>H</original>
    <variation>A</variation>
    <location>
        <position position="54"/>
    </location>
</feature>
<feature type="mutagenesis site" description="Complete loss of activity." evidence="4">
    <original>S</original>
    <variation>A</variation>
    <location>
        <position position="126"/>
    </location>
</feature>
<feature type="mutagenesis site" description="No effect on enzyme activity." evidence="4">
    <original>D</original>
    <variation>A</variation>
    <variation>E</variation>
    <location>
        <position position="160"/>
    </location>
</feature>
<feature type="mutagenesis site" description="Complete loss of activity." evidence="4">
    <original>D</original>
    <variation>A</variation>
    <location>
        <position position="280"/>
    </location>
</feature>
<feature type="mutagenesis site" description="No effect on enzyme activity." evidence="4">
    <original>D</original>
    <variation>E</variation>
    <location>
        <position position="280"/>
    </location>
</feature>
<feature type="mutagenesis site" description="75% loss of activity." evidence="4">
    <original>D</original>
    <variation>A</variation>
    <location>
        <position position="302"/>
    </location>
</feature>
<feature type="mutagenesis site" description="No effect on enzyme activity." evidence="4">
    <original>D</original>
    <variation>E</variation>
    <location>
        <position position="302"/>
    </location>
</feature>
<feature type="mutagenesis site" description="Complete loss of activity." evidence="4">
    <original>H</original>
    <variation>A</variation>
    <location>
        <position position="324"/>
    </location>
</feature>
<feature type="strand" evidence="19">
    <location>
        <begin position="50"/>
        <end position="53"/>
    </location>
</feature>
<feature type="strand" evidence="19">
    <location>
        <begin position="56"/>
        <end position="62"/>
    </location>
</feature>
<feature type="turn" evidence="19">
    <location>
        <begin position="63"/>
        <end position="65"/>
    </location>
</feature>
<feature type="strand" evidence="19">
    <location>
        <begin position="66"/>
        <end position="69"/>
    </location>
</feature>
<feature type="helix" evidence="19">
    <location>
        <begin position="72"/>
        <end position="78"/>
    </location>
</feature>
<feature type="strand" evidence="19">
    <location>
        <begin position="83"/>
        <end position="85"/>
    </location>
</feature>
<feature type="strand" evidence="19">
    <location>
        <begin position="94"/>
        <end position="96"/>
    </location>
</feature>
<feature type="helix" evidence="19">
    <location>
        <begin position="100"/>
        <end position="115"/>
    </location>
</feature>
<feature type="strand" evidence="19">
    <location>
        <begin position="120"/>
        <end position="125"/>
    </location>
</feature>
<feature type="helix" evidence="19">
    <location>
        <begin position="127"/>
        <end position="138"/>
    </location>
</feature>
<feature type="helix" evidence="19">
    <location>
        <begin position="140"/>
        <end position="142"/>
    </location>
</feature>
<feature type="strand" evidence="19">
    <location>
        <begin position="143"/>
        <end position="150"/>
    </location>
</feature>
<feature type="helix" evidence="19">
    <location>
        <begin position="157"/>
        <end position="165"/>
    </location>
</feature>
<feature type="turn" evidence="19">
    <location>
        <begin position="166"/>
        <end position="168"/>
    </location>
</feature>
<feature type="helix" evidence="19">
    <location>
        <begin position="176"/>
        <end position="186"/>
    </location>
</feature>
<feature type="helix" evidence="19">
    <location>
        <begin position="195"/>
        <end position="201"/>
    </location>
</feature>
<feature type="helix" evidence="19">
    <location>
        <begin position="202"/>
        <end position="206"/>
    </location>
</feature>
<feature type="helix" evidence="19">
    <location>
        <begin position="208"/>
        <end position="217"/>
    </location>
</feature>
<feature type="turn" evidence="18">
    <location>
        <begin position="226"/>
        <end position="228"/>
    </location>
</feature>
<feature type="strand" evidence="19">
    <location>
        <begin position="234"/>
        <end position="238"/>
    </location>
</feature>
<feature type="strand" evidence="19">
    <location>
        <begin position="241"/>
        <end position="250"/>
    </location>
</feature>
<feature type="strand" evidence="19">
    <location>
        <begin position="253"/>
        <end position="255"/>
    </location>
</feature>
<feature type="strand" evidence="19">
    <location>
        <begin position="265"/>
        <end position="267"/>
    </location>
</feature>
<feature type="helix" evidence="19">
    <location>
        <begin position="276"/>
        <end position="279"/>
    </location>
</feature>
<feature type="helix" evidence="19">
    <location>
        <begin position="282"/>
        <end position="294"/>
    </location>
</feature>
<feature type="turn" evidence="19">
    <location>
        <begin position="295"/>
        <end position="297"/>
    </location>
</feature>
<feature type="strand" evidence="19">
    <location>
        <begin position="300"/>
        <end position="304"/>
    </location>
</feature>
<feature type="helix" evidence="19">
    <location>
        <begin position="307"/>
        <end position="310"/>
    </location>
</feature>
<feature type="strand" evidence="19">
    <location>
        <begin position="313"/>
        <end position="320"/>
    </location>
</feature>
<feature type="helix" evidence="19">
    <location>
        <begin position="326"/>
        <end position="328"/>
    </location>
</feature>
<feature type="turn" evidence="19">
    <location>
        <begin position="329"/>
        <end position="333"/>
    </location>
</feature>
<feature type="helix" evidence="19">
    <location>
        <begin position="342"/>
        <end position="355"/>
    </location>
</feature>
<evidence type="ECO:0000250" key="1">
    <source>
        <dbReference type="UniProtKB" id="P22088"/>
    </source>
</evidence>
<evidence type="ECO:0000250" key="2">
    <source>
        <dbReference type="UniProtKB" id="P26876"/>
    </source>
</evidence>
<evidence type="ECO:0000255" key="3"/>
<evidence type="ECO:0000269" key="4">
    <source>
    </source>
</evidence>
<evidence type="ECO:0000269" key="5">
    <source>
    </source>
</evidence>
<evidence type="ECO:0000269" key="6">
    <source>
    </source>
</evidence>
<evidence type="ECO:0000269" key="7">
    <source>
    </source>
</evidence>
<evidence type="ECO:0000269" key="8">
    <source>
    </source>
</evidence>
<evidence type="ECO:0000269" key="9">
    <source>
    </source>
</evidence>
<evidence type="ECO:0000303" key="10">
    <source>
    </source>
</evidence>
<evidence type="ECO:0000305" key="11"/>
<evidence type="ECO:0000305" key="12">
    <source>
    </source>
</evidence>
<evidence type="ECO:0000305" key="13">
    <source>
    </source>
</evidence>
<evidence type="ECO:0000305" key="14">
    <source>
    </source>
</evidence>
<evidence type="ECO:0000305" key="15">
    <source>
    </source>
</evidence>
<evidence type="ECO:0007744" key="16">
    <source>
        <dbReference type="PDB" id="1TAH"/>
    </source>
</evidence>
<evidence type="ECO:0007744" key="17">
    <source>
        <dbReference type="PDB" id="2ES4"/>
    </source>
</evidence>
<evidence type="ECO:0007829" key="18">
    <source>
        <dbReference type="PDB" id="1TAH"/>
    </source>
</evidence>
<evidence type="ECO:0007829" key="19">
    <source>
        <dbReference type="PDB" id="2ES4"/>
    </source>
</evidence>
<comment type="function">
    <text evidence="4 6">Catalyzes the hydrolysis of triacylglycerol.</text>
</comment>
<comment type="catalytic activity">
    <reaction evidence="12">
        <text>a triacylglycerol + H2O = a diacylglycerol + a fatty acid + H(+)</text>
        <dbReference type="Rhea" id="RHEA:12044"/>
        <dbReference type="ChEBI" id="CHEBI:15377"/>
        <dbReference type="ChEBI" id="CHEBI:15378"/>
        <dbReference type="ChEBI" id="CHEBI:17855"/>
        <dbReference type="ChEBI" id="CHEBI:18035"/>
        <dbReference type="ChEBI" id="CHEBI:28868"/>
        <dbReference type="EC" id="3.1.1.3"/>
    </reaction>
</comment>
<comment type="cofactor">
    <cofactor evidence="5 7">
        <name>Ca(2+)</name>
        <dbReference type="ChEBI" id="CHEBI:29108"/>
    </cofactor>
    <text evidence="5 7">Binds 1 Ca(2+) ion per subunit.</text>
</comment>
<comment type="biophysicochemical properties">
    <kinetics>
        <KM evidence="4">0.7 mM for oil emulsion</KM>
        <Vmax evidence="4">4.0 umol/min/mg enzyme</Vmax>
    </kinetics>
</comment>
<comment type="subunit">
    <text evidence="5 13 14">Monomer (Probable). Interacts with lipase-specific foldase Lif (PubMed:16518399).</text>
</comment>
<comment type="interaction">
    <interactant intactId="EBI-26563962">
        <id>P0DUB8</id>
    </interactant>
    <interactant intactId="EBI-993746">
        <id>Q05490</id>
        <label>lifO</label>
    </interactant>
    <organismsDiffer>false</organismsDiffer>
    <experiments>3</experiments>
</comment>
<comment type="subcellular location">
    <subcellularLocation>
        <location evidence="12 15">Secreted</location>
    </subcellularLocation>
    <text evidence="9 15">Correct periplasmic folding, necessary for secretion, requires the lipase-specific foldase LifO (also called lipB). Secretion probably occurs via a type II secretion system.</text>
</comment>
<comment type="induction">
    <text evidence="8">By growth on olive oil or oleic acid; part of the lip-lifO (also called lipA-lipB) operon.</text>
</comment>
<comment type="disruption phenotype">
    <text evidence="8">Loss of extracellular active lipase. Not required for growth on oleic acid as a carbon source.</text>
</comment>
<comment type="biotechnology">
    <text evidence="8">Found to be superior in improving overall detergency.</text>
</comment>
<comment type="similarity">
    <text evidence="11">Belongs to the AB hydrolase superfamily. Pseudomonas lipase family.</text>
</comment>
<dbReference type="EC" id="3.1.1.3" evidence="12"/>
<dbReference type="EMBL" id="X70354">
    <property type="protein sequence ID" value="CAA49812.1"/>
    <property type="molecule type" value="Genomic_DNA"/>
</dbReference>
<dbReference type="PIR" id="A48952">
    <property type="entry name" value="A48952"/>
</dbReference>
<dbReference type="RefSeq" id="WP_042628289.1">
    <property type="nucleotide sequence ID" value="NZ_BSTO01000021.1"/>
</dbReference>
<dbReference type="PDB" id="1TAH">
    <property type="method" value="X-ray"/>
    <property type="resolution" value="3.00 A"/>
    <property type="chains" value="A/B/C/D=41-358"/>
</dbReference>
<dbReference type="PDB" id="2ES4">
    <property type="method" value="X-ray"/>
    <property type="resolution" value="1.85 A"/>
    <property type="chains" value="A/B=40-358"/>
</dbReference>
<dbReference type="PDBsum" id="1TAH"/>
<dbReference type="PDBsum" id="2ES4"/>
<dbReference type="SMR" id="P0DUB8"/>
<dbReference type="DIP" id="DIP-29069N"/>
<dbReference type="IntAct" id="P0DUB8">
    <property type="interactions" value="1"/>
</dbReference>
<dbReference type="ESTHER" id="burgl-lipas">
    <property type="family name" value="Bacterial_lip_FamI.2"/>
</dbReference>
<dbReference type="EvolutionaryTrace" id="P0DUB8"/>
<dbReference type="GO" id="GO:0005576">
    <property type="term" value="C:extracellular region"/>
    <property type="evidence" value="ECO:0007669"/>
    <property type="project" value="UniProtKB-SubCell"/>
</dbReference>
<dbReference type="GO" id="GO:0046872">
    <property type="term" value="F:metal ion binding"/>
    <property type="evidence" value="ECO:0007669"/>
    <property type="project" value="UniProtKB-KW"/>
</dbReference>
<dbReference type="GO" id="GO:0004806">
    <property type="term" value="F:triacylglycerol lipase activity"/>
    <property type="evidence" value="ECO:0007669"/>
    <property type="project" value="UniProtKB-EC"/>
</dbReference>
<dbReference type="GO" id="GO:0016042">
    <property type="term" value="P:lipid catabolic process"/>
    <property type="evidence" value="ECO:0007669"/>
    <property type="project" value="UniProtKB-KW"/>
</dbReference>
<dbReference type="Gene3D" id="3.40.50.1820">
    <property type="entry name" value="alpha/beta hydrolase"/>
    <property type="match status" value="1"/>
</dbReference>
<dbReference type="InterPro" id="IPR000073">
    <property type="entry name" value="AB_hydrolase_1"/>
</dbReference>
<dbReference type="InterPro" id="IPR029058">
    <property type="entry name" value="AB_hydrolase_fold"/>
</dbReference>
<dbReference type="Pfam" id="PF00561">
    <property type="entry name" value="Abhydrolase_1"/>
    <property type="match status" value="1"/>
</dbReference>
<dbReference type="SUPFAM" id="SSF53474">
    <property type="entry name" value="alpha/beta-Hydrolases"/>
    <property type="match status" value="1"/>
</dbReference>
<dbReference type="PROSITE" id="PS00120">
    <property type="entry name" value="LIPASE_SER"/>
    <property type="match status" value="1"/>
</dbReference>
<protein>
    <recommendedName>
        <fullName evidence="10">Triacylglycerol lipase</fullName>
        <ecNumber evidence="12">3.1.1.3</ecNumber>
    </recommendedName>
    <alternativeName>
        <fullName evidence="10">Extracellular lipase</fullName>
    </alternativeName>
    <alternativeName>
        <fullName evidence="2">Triacylglycerol ester hydrolase</fullName>
    </alternativeName>
</protein>
<gene>
    <name evidence="11" type="primary">lip</name>
    <name evidence="10" type="synonym">lipA</name>
</gene>
<accession>P0DUB8</accession>
<accession>Q05489</accession>
<sequence>MVRSMRSRVAARAVAWALAVMPLAGAAGLTMAASPAAVAADTYAATRYPVILVHGLAGTDKFANVVDYWYGIQSDLQSHGAKVYVANLSGFQSDDGPNGRGEQLLAYVKQVLAATGATKVNLIGHSQGGLTSRYVAAVAPQLVASVTTIGTPHRGSEFADFVQDVLKTDPTGLSSTVIAAFVNVFGTLVSSSHNTDQDALAALRTLTTAQTATYNRNFPSAGLGAPGSCQTGAATETVGGSQHLLYSWGGTAIQPTSTVLGVTGATDTSTGTLDVANVTDPSTLALLATGAVMINRASGQNDGLVSRCSSLFGQVISTSYHWNHLDEINQLLGVRGANAEDPVAVIRTHVNRLKLQGV</sequence>
<name>LIP_BURPL</name>